<reference key="1">
    <citation type="journal article" date="1996" name="Nat. Genet.">
        <title>Identification of BTG2, an antiproliferative p53-dependent component of the DNA damage cellular response pathway.</title>
        <authorList>
            <person name="Rouault J.-P."/>
            <person name="Falette N."/>
            <person name="Guehenneux F."/>
            <person name="Guillot C."/>
            <person name="Rimokh R."/>
            <person name="Wang Q."/>
            <person name="Berthet C."/>
            <person name="Moyret-Lalle C."/>
            <person name="Savatier P."/>
            <person name="Pain B."/>
            <person name="Shaw P."/>
            <person name="Berger R."/>
            <person name="Samarut J."/>
            <person name="Magaud J.-P."/>
            <person name="Ozturk M."/>
            <person name="Samarut C."/>
            <person name="Puisieux A."/>
        </authorList>
    </citation>
    <scope>NUCLEOTIDE SEQUENCE [MRNA]</scope>
</reference>
<reference key="2">
    <citation type="journal article" date="2001" name="J. Cell. Physiol.">
        <title>The gene PC3(TIS21/BTG2), prototype member of the PC3/BTG/TOB family: regulator in control of cell growth, differentiation, and DNA repair?</title>
        <authorList>
            <person name="Tirone F."/>
        </authorList>
    </citation>
    <scope>NUCLEOTIDE SEQUENCE [MRNA]</scope>
    <source>
        <tissue>Fetal liver</tissue>
    </source>
</reference>
<reference key="3">
    <citation type="journal article" date="2002" name="Gene">
        <title>The human BTG2/TIS21/PC3 gene: genomic structure, transcriptional regulation and evaluation as a candidate tumor suppressor gene.</title>
        <authorList>
            <person name="Duriez C."/>
            <person name="Falette N."/>
            <person name="Audoynaud C."/>
            <person name="Moyret-Lalle C."/>
            <person name="Bensaad K."/>
            <person name="Courtois S."/>
            <person name="Wang Q."/>
            <person name="Soussi T."/>
            <person name="Puisieux A."/>
        </authorList>
    </citation>
    <scope>NUCLEOTIDE SEQUENCE [GENOMIC DNA]</scope>
</reference>
<reference key="4">
    <citation type="journal article" date="2006" name="Nature">
        <title>The DNA sequence and biological annotation of human chromosome 1.</title>
        <authorList>
            <person name="Gregory S.G."/>
            <person name="Barlow K.F."/>
            <person name="McLay K.E."/>
            <person name="Kaul R."/>
            <person name="Swarbreck D."/>
            <person name="Dunham A."/>
            <person name="Scott C.E."/>
            <person name="Howe K.L."/>
            <person name="Woodfine K."/>
            <person name="Spencer C.C.A."/>
            <person name="Jones M.C."/>
            <person name="Gillson C."/>
            <person name="Searle S."/>
            <person name="Zhou Y."/>
            <person name="Kokocinski F."/>
            <person name="McDonald L."/>
            <person name="Evans R."/>
            <person name="Phillips K."/>
            <person name="Atkinson A."/>
            <person name="Cooper R."/>
            <person name="Jones C."/>
            <person name="Hall R.E."/>
            <person name="Andrews T.D."/>
            <person name="Lloyd C."/>
            <person name="Ainscough R."/>
            <person name="Almeida J.P."/>
            <person name="Ambrose K.D."/>
            <person name="Anderson F."/>
            <person name="Andrew R.W."/>
            <person name="Ashwell R.I.S."/>
            <person name="Aubin K."/>
            <person name="Babbage A.K."/>
            <person name="Bagguley C.L."/>
            <person name="Bailey J."/>
            <person name="Beasley H."/>
            <person name="Bethel G."/>
            <person name="Bird C.P."/>
            <person name="Bray-Allen S."/>
            <person name="Brown J.Y."/>
            <person name="Brown A.J."/>
            <person name="Buckley D."/>
            <person name="Burton J."/>
            <person name="Bye J."/>
            <person name="Carder C."/>
            <person name="Chapman J.C."/>
            <person name="Clark S.Y."/>
            <person name="Clarke G."/>
            <person name="Clee C."/>
            <person name="Cobley V."/>
            <person name="Collier R.E."/>
            <person name="Corby N."/>
            <person name="Coville G.J."/>
            <person name="Davies J."/>
            <person name="Deadman R."/>
            <person name="Dunn M."/>
            <person name="Earthrowl M."/>
            <person name="Ellington A.G."/>
            <person name="Errington H."/>
            <person name="Frankish A."/>
            <person name="Frankland J."/>
            <person name="French L."/>
            <person name="Garner P."/>
            <person name="Garnett J."/>
            <person name="Gay L."/>
            <person name="Ghori M.R.J."/>
            <person name="Gibson R."/>
            <person name="Gilby L.M."/>
            <person name="Gillett W."/>
            <person name="Glithero R.J."/>
            <person name="Grafham D.V."/>
            <person name="Griffiths C."/>
            <person name="Griffiths-Jones S."/>
            <person name="Grocock R."/>
            <person name="Hammond S."/>
            <person name="Harrison E.S.I."/>
            <person name="Hart E."/>
            <person name="Haugen E."/>
            <person name="Heath P.D."/>
            <person name="Holmes S."/>
            <person name="Holt K."/>
            <person name="Howden P.J."/>
            <person name="Hunt A.R."/>
            <person name="Hunt S.E."/>
            <person name="Hunter G."/>
            <person name="Isherwood J."/>
            <person name="James R."/>
            <person name="Johnson C."/>
            <person name="Johnson D."/>
            <person name="Joy A."/>
            <person name="Kay M."/>
            <person name="Kershaw J.K."/>
            <person name="Kibukawa M."/>
            <person name="Kimberley A.M."/>
            <person name="King A."/>
            <person name="Knights A.J."/>
            <person name="Lad H."/>
            <person name="Laird G."/>
            <person name="Lawlor S."/>
            <person name="Leongamornlert D.A."/>
            <person name="Lloyd D.M."/>
            <person name="Loveland J."/>
            <person name="Lovell J."/>
            <person name="Lush M.J."/>
            <person name="Lyne R."/>
            <person name="Martin S."/>
            <person name="Mashreghi-Mohammadi M."/>
            <person name="Matthews L."/>
            <person name="Matthews N.S.W."/>
            <person name="McLaren S."/>
            <person name="Milne S."/>
            <person name="Mistry S."/>
            <person name="Moore M.J.F."/>
            <person name="Nickerson T."/>
            <person name="O'Dell C.N."/>
            <person name="Oliver K."/>
            <person name="Palmeiri A."/>
            <person name="Palmer S.A."/>
            <person name="Parker A."/>
            <person name="Patel D."/>
            <person name="Pearce A.V."/>
            <person name="Peck A.I."/>
            <person name="Pelan S."/>
            <person name="Phelps K."/>
            <person name="Phillimore B.J."/>
            <person name="Plumb R."/>
            <person name="Rajan J."/>
            <person name="Raymond C."/>
            <person name="Rouse G."/>
            <person name="Saenphimmachak C."/>
            <person name="Sehra H.K."/>
            <person name="Sheridan E."/>
            <person name="Shownkeen R."/>
            <person name="Sims S."/>
            <person name="Skuce C.D."/>
            <person name="Smith M."/>
            <person name="Steward C."/>
            <person name="Subramanian S."/>
            <person name="Sycamore N."/>
            <person name="Tracey A."/>
            <person name="Tromans A."/>
            <person name="Van Helmond Z."/>
            <person name="Wall M."/>
            <person name="Wallis J.M."/>
            <person name="White S."/>
            <person name="Whitehead S.L."/>
            <person name="Wilkinson J.E."/>
            <person name="Willey D.L."/>
            <person name="Williams H."/>
            <person name="Wilming L."/>
            <person name="Wray P.W."/>
            <person name="Wu Z."/>
            <person name="Coulson A."/>
            <person name="Vaudin M."/>
            <person name="Sulston J.E."/>
            <person name="Durbin R.M."/>
            <person name="Hubbard T."/>
            <person name="Wooster R."/>
            <person name="Dunham I."/>
            <person name="Carter N.P."/>
            <person name="McVean G."/>
            <person name="Ross M.T."/>
            <person name="Harrow J."/>
            <person name="Olson M.V."/>
            <person name="Beck S."/>
            <person name="Rogers J."/>
            <person name="Bentley D.R."/>
        </authorList>
    </citation>
    <scope>NUCLEOTIDE SEQUENCE [LARGE SCALE GENOMIC DNA]</scope>
</reference>
<reference key="5">
    <citation type="submission" date="2005-07" db="EMBL/GenBank/DDBJ databases">
        <authorList>
            <person name="Mural R.J."/>
            <person name="Istrail S."/>
            <person name="Sutton G."/>
            <person name="Florea L."/>
            <person name="Halpern A.L."/>
            <person name="Mobarry C.M."/>
            <person name="Lippert R."/>
            <person name="Walenz B."/>
            <person name="Shatkay H."/>
            <person name="Dew I."/>
            <person name="Miller J.R."/>
            <person name="Flanigan M.J."/>
            <person name="Edwards N.J."/>
            <person name="Bolanos R."/>
            <person name="Fasulo D."/>
            <person name="Halldorsson B.V."/>
            <person name="Hannenhalli S."/>
            <person name="Turner R."/>
            <person name="Yooseph S."/>
            <person name="Lu F."/>
            <person name="Nusskern D.R."/>
            <person name="Shue B.C."/>
            <person name="Zheng X.H."/>
            <person name="Zhong F."/>
            <person name="Delcher A.L."/>
            <person name="Huson D.H."/>
            <person name="Kravitz S.A."/>
            <person name="Mouchard L."/>
            <person name="Reinert K."/>
            <person name="Remington K.A."/>
            <person name="Clark A.G."/>
            <person name="Waterman M.S."/>
            <person name="Eichler E.E."/>
            <person name="Adams M.D."/>
            <person name="Hunkapiller M.W."/>
            <person name="Myers E.W."/>
            <person name="Venter J.C."/>
        </authorList>
    </citation>
    <scope>NUCLEOTIDE SEQUENCE [LARGE SCALE GENOMIC DNA]</scope>
</reference>
<reference key="6">
    <citation type="journal article" date="2004" name="Genome Res.">
        <title>The status, quality, and expansion of the NIH full-length cDNA project: the Mammalian Gene Collection (MGC).</title>
        <authorList>
            <consortium name="The MGC Project Team"/>
        </authorList>
    </citation>
    <scope>NUCLEOTIDE SEQUENCE [LARGE SCALE MRNA]</scope>
</reference>
<reference key="7">
    <citation type="journal article" date="1998" name="J. Biol. Chem.">
        <title>Interaction of BTG1 and p53-regulated BTG2 gene products with mCaf1, the murine homolog of a component of the yeast CCR4 transcriptional regulatory complex.</title>
        <authorList>
            <person name="Rouault J.P."/>
            <person name="Prevot D."/>
            <person name="Berthet C."/>
            <person name="Birot A.M."/>
            <person name="Billaud M."/>
            <person name="Magaud J.P."/>
            <person name="Corbo L."/>
        </authorList>
    </citation>
    <scope>INTERACTION WITH CNOT7</scope>
</reference>
<reference key="8">
    <citation type="journal article" date="2001" name="J. Biol. Chem.">
        <title>Relationships of the antiproliferative proteins BTG1 and BTG2 with CAF1, the human homolog of a component of the yeast CCR4 transcriptional complex: involvement in estrogen receptor alpha signaling pathway.</title>
        <authorList>
            <person name="Prevot D."/>
            <person name="Morel A.P."/>
            <person name="Voeltzel T."/>
            <person name="Rostan M.C."/>
            <person name="Rimokh R."/>
            <person name="Magaud J.P."/>
            <person name="Corbo L."/>
        </authorList>
    </citation>
    <scope>INTERACTION WITH CNOT8</scope>
</reference>
<reference key="9">
    <citation type="journal article" date="2003" name="J. Cell Sci.">
        <title>BTG2 antiproliferative protein interacts with the human CCR4 complex existing in vivo in three cell-cycle-regulated forms.</title>
        <authorList>
            <person name="Morel A.-P."/>
            <person name="Sentis S."/>
            <person name="Bianchin C."/>
            <person name="Le Romancer M."/>
            <person name="Jonard L."/>
            <person name="Rostan M.-C."/>
            <person name="Rimokh R."/>
            <person name="Corbo L."/>
        </authorList>
    </citation>
    <scope>FUNCTION</scope>
    <scope>INTERACTION WITH THE CCR4-NOT COMPLEX</scope>
</reference>
<reference key="10">
    <citation type="journal article" date="2005" name="J. Biol. Chem.">
        <title>Phosphorylation of serine 147 of tis21/BTG2/pc3 by p-Erk1/2 induces Pin-1 binding in cytoplasm and cell death.</title>
        <authorList>
            <person name="Hong J.W."/>
            <person name="Ryu M.S."/>
            <person name="Lim I.K."/>
        </authorList>
    </citation>
    <scope>PHOSPHORYLATION AT SER-147 AND SER-149</scope>
    <scope>MUTAGENESIS OF SER-147; PRO-148 AND SER-149</scope>
    <scope>INTERACTION WITH PIN1</scope>
    <scope>FUNCTION</scope>
</reference>
<reference key="11">
    <citation type="journal article" date="2008" name="EMBO J.">
        <title>The BTG2 protein is a general activator of mRNA deadenylation.</title>
        <authorList>
            <person name="Mauxion F."/>
            <person name="Faux C."/>
            <person name="Seraphin B."/>
        </authorList>
    </citation>
    <scope>FUNCTION</scope>
</reference>
<reference key="12">
    <citation type="journal article" date="2008" name="Neurosci. Lett.">
        <title>PRMT1 and Btg2 regulates neurite outgrowth of Neuro2a cells.</title>
        <authorList>
            <person name="Miyata S."/>
            <person name="Mori Y."/>
            <person name="Tohyama M."/>
        </authorList>
    </citation>
    <scope>FUNCTION</scope>
</reference>
<reference key="13">
    <citation type="journal article" date="2012" name="PLoS ONE">
        <title>The anti-proliferative activity of BTG/TOB proteins is mediated via the Caf1a (CNOT7) and Caf1b (CNOT8) deadenylase subunits of the Ccr4-not complex.</title>
        <authorList>
            <person name="Doidge R."/>
            <person name="Mittal S."/>
            <person name="Aslam A."/>
            <person name="Winkler G.S."/>
        </authorList>
    </citation>
    <scope>FUNCTION</scope>
    <scope>INTERACTION WITH CNOT7 AND CNOT8</scope>
    <scope>MUTAGENESIS OF HIS-53; TYR-65; ASP-75; TRP-103 AND ASP-105</scope>
</reference>
<reference key="14">
    <citation type="journal article" date="2008" name="Nucleic Acids Res.">
        <title>Crystal structures of human BTG2 and mouse TIS21 involved in suppression of CAF1 deadenylase activity.</title>
        <authorList>
            <person name="Yang X."/>
            <person name="Morita M."/>
            <person name="Wang H."/>
            <person name="Suzuki T."/>
            <person name="Yang W."/>
            <person name="Luo Y."/>
            <person name="Zhao C."/>
            <person name="Yu Y."/>
            <person name="Bartlam M."/>
            <person name="Yamamoto T."/>
            <person name="Rao Z."/>
        </authorList>
    </citation>
    <scope>X-RAY CRYSTALLOGRAPHY (2.26 ANGSTROMS) OF 7-128</scope>
    <scope>INTERACTION WITH CNOT7</scope>
    <scope>MUTAGENESIS OF TYR-65; TRP-103 AND GLU-115</scope>
</reference>
<sequence>MSHGKGTDMLPEIAAAVGFLSSLLRTRGCVSEQRLKVFSGALQEALTEHYKHHWFPEKPSKGSGYRCIRINHKMDPIISRVASQIGLSQPQLHQLLPSELTLWVDPYEVSYRIGEDGSICVLYEEAPLAASCGLLTCKNQVLLGRSSPSKNYVMAVSS</sequence>
<comment type="function">
    <text evidence="1 3 4 5 6 8">Anti-proliferative protein; the function is mediated by association with deadenylase subunits of the CCR4-NOT complex. Activates mRNA deadenylation in a CNOT6 and CNOT7-dependent manner. In vitro can inhibit deadenylase activity of CNOT7 and CNOT8. Involved in cell cycle regulation. Could be involved in the growth arrest and differentiation of the neuronal precursors (By similarity). Modulates transcription regulation mediated by ESR1. Involved in mitochondrial depolarization and neurite outgrowth.</text>
</comment>
<comment type="subunit">
    <text evidence="1 2 3 4 7 8 9">Interacts with PRKCABP (By similarity). Interacts with CNOT7 and CNOT8; indicative for an association with the CCR4-NOT complex. Interacts with PIN1, inducing mitochondrial depolarization.</text>
</comment>
<comment type="interaction">
    <interactant intactId="EBI-1047576">
        <id>P78543</id>
    </interactant>
    <interactant intactId="EBI-608057">
        <id>P10275</id>
        <label>AR</label>
    </interactant>
    <organismsDiffer>false</organismsDiffer>
    <experiments>4</experiments>
</comment>
<comment type="interaction">
    <interactant intactId="EBI-1047576">
        <id>P78543</id>
    </interactant>
    <interactant intactId="EBI-2105113">
        <id>Q9UIV1</id>
        <label>CNOT7</label>
    </interactant>
    <organismsDiffer>false</organismsDiffer>
    <experiments>8</experiments>
</comment>
<comment type="interaction">
    <interactant intactId="EBI-1047576">
        <id>P78543</id>
    </interactant>
    <interactant intactId="EBI-742299">
        <id>Q9UFF9</id>
        <label>CNOT8</label>
    </interactant>
    <organismsDiffer>false</organismsDiffer>
    <experiments>5</experiments>
</comment>
<comment type="interaction">
    <interactant intactId="EBI-1047576">
        <id>P78543</id>
    </interactant>
    <interactant intactId="EBI-2104739">
        <id>Q60809</id>
        <label>Cnot7</label>
    </interactant>
    <organismsDiffer>true</organismsDiffer>
    <experiments>5</experiments>
</comment>
<comment type="PTM">
    <text evidence="4">Phosphorylated at Ser-147 by MAPK1/ERK2 and MAPK3/ERK1, and at Ser-149 by MAPK14, leading to PIN1-binding and mitochondrial depolarization.</text>
</comment>
<comment type="similarity">
    <text evidence="10">Belongs to the BTG family.</text>
</comment>
<name>BTG2_HUMAN</name>
<evidence type="ECO:0000250" key="1"/>
<evidence type="ECO:0000269" key="2">
    <source>
    </source>
</evidence>
<evidence type="ECO:0000269" key="3">
    <source>
    </source>
</evidence>
<evidence type="ECO:0000269" key="4">
    <source>
    </source>
</evidence>
<evidence type="ECO:0000269" key="5">
    <source>
    </source>
</evidence>
<evidence type="ECO:0000269" key="6">
    <source>
    </source>
</evidence>
<evidence type="ECO:0000269" key="7">
    <source>
    </source>
</evidence>
<evidence type="ECO:0000269" key="8">
    <source>
    </source>
</evidence>
<evidence type="ECO:0000269" key="9">
    <source>
    </source>
</evidence>
<evidence type="ECO:0000305" key="10"/>
<evidence type="ECO:0007829" key="11">
    <source>
        <dbReference type="PDB" id="3E9V"/>
    </source>
</evidence>
<keyword id="KW-0002">3D-structure</keyword>
<keyword id="KW-0597">Phosphoprotein</keyword>
<keyword id="KW-1267">Proteomics identification</keyword>
<keyword id="KW-1185">Reference proteome</keyword>
<keyword id="KW-0804">Transcription</keyword>
<keyword id="KW-0805">Transcription regulation</keyword>
<gene>
    <name type="primary">BTG2</name>
    <name type="synonym">PC3</name>
</gene>
<organism>
    <name type="scientific">Homo sapiens</name>
    <name type="common">Human</name>
    <dbReference type="NCBI Taxonomy" id="9606"/>
    <lineage>
        <taxon>Eukaryota</taxon>
        <taxon>Metazoa</taxon>
        <taxon>Chordata</taxon>
        <taxon>Craniata</taxon>
        <taxon>Vertebrata</taxon>
        <taxon>Euteleostomi</taxon>
        <taxon>Mammalia</taxon>
        <taxon>Eutheria</taxon>
        <taxon>Euarchontoglires</taxon>
        <taxon>Primates</taxon>
        <taxon>Haplorrhini</taxon>
        <taxon>Catarrhini</taxon>
        <taxon>Hominidae</taxon>
        <taxon>Homo</taxon>
    </lineage>
</organism>
<protein>
    <recommendedName>
        <fullName>Protein BTG2</fullName>
    </recommendedName>
    <alternativeName>
        <fullName>BTG family member 2</fullName>
    </alternativeName>
    <alternativeName>
        <fullName>NGF-inducible anti-proliferative protein PC3</fullName>
    </alternativeName>
</protein>
<accession>P78543</accession>
<accession>A0A024R986</accession>
<accession>Q3KR25</accession>
<accession>Q5VUT0</accession>
<proteinExistence type="evidence at protein level"/>
<dbReference type="EMBL" id="U72649">
    <property type="protein sequence ID" value="AAB37580.1"/>
    <property type="molecule type" value="mRNA"/>
</dbReference>
<dbReference type="EMBL" id="Y09943">
    <property type="protein sequence ID" value="CAA71074.1"/>
    <property type="molecule type" value="mRNA"/>
</dbReference>
<dbReference type="EMBL" id="AF361937">
    <property type="protein sequence ID" value="AAL05626.1"/>
    <property type="molecule type" value="Genomic_DNA"/>
</dbReference>
<dbReference type="EMBL" id="AL513326">
    <property type="status" value="NOT_ANNOTATED_CDS"/>
    <property type="molecule type" value="Genomic_DNA"/>
</dbReference>
<dbReference type="EMBL" id="CH471067">
    <property type="protein sequence ID" value="EAW91475.1"/>
    <property type="molecule type" value="Genomic_DNA"/>
</dbReference>
<dbReference type="EMBL" id="CH471067">
    <property type="protein sequence ID" value="EAW91476.1"/>
    <property type="molecule type" value="Genomic_DNA"/>
</dbReference>
<dbReference type="EMBL" id="BC105948">
    <property type="protein sequence ID" value="AAI05949.1"/>
    <property type="molecule type" value="mRNA"/>
</dbReference>
<dbReference type="EMBL" id="BC105949">
    <property type="protein sequence ID" value="AAI05950.1"/>
    <property type="molecule type" value="mRNA"/>
</dbReference>
<dbReference type="CCDS" id="CCDS1437.1"/>
<dbReference type="RefSeq" id="NP_006754.1">
    <property type="nucleotide sequence ID" value="NM_006763.3"/>
</dbReference>
<dbReference type="PDB" id="3DJU">
    <property type="method" value="X-ray"/>
    <property type="resolution" value="2.26 A"/>
    <property type="chains" value="B=7-128"/>
</dbReference>
<dbReference type="PDB" id="3E9V">
    <property type="method" value="X-ray"/>
    <property type="resolution" value="1.70 A"/>
    <property type="chains" value="A=8-127"/>
</dbReference>
<dbReference type="PDBsum" id="3DJU"/>
<dbReference type="PDBsum" id="3E9V"/>
<dbReference type="SMR" id="P78543"/>
<dbReference type="BioGRID" id="113593">
    <property type="interactions" value="27"/>
</dbReference>
<dbReference type="ELM" id="P78543"/>
<dbReference type="FunCoup" id="P78543">
    <property type="interactions" value="1364"/>
</dbReference>
<dbReference type="IntAct" id="P78543">
    <property type="interactions" value="5"/>
</dbReference>
<dbReference type="MINT" id="P78543"/>
<dbReference type="STRING" id="9606.ENSP00000290551"/>
<dbReference type="GlyCosmos" id="P78543">
    <property type="glycosylation" value="2 sites, 1 glycan"/>
</dbReference>
<dbReference type="GlyGen" id="P78543">
    <property type="glycosylation" value="2 sites, 1 O-linked glycan (2 sites)"/>
</dbReference>
<dbReference type="iPTMnet" id="P78543"/>
<dbReference type="PhosphoSitePlus" id="P78543"/>
<dbReference type="BioMuta" id="BTG2"/>
<dbReference type="DMDM" id="3023409"/>
<dbReference type="MassIVE" id="P78543"/>
<dbReference type="PaxDb" id="9606-ENSP00000290551"/>
<dbReference type="PeptideAtlas" id="P78543"/>
<dbReference type="ProteomicsDB" id="57645"/>
<dbReference type="Antibodypedia" id="1189">
    <property type="antibodies" value="323 antibodies from 29 providers"/>
</dbReference>
<dbReference type="DNASU" id="7832"/>
<dbReference type="Ensembl" id="ENST00000290551.5">
    <property type="protein sequence ID" value="ENSP00000290551.4"/>
    <property type="gene ID" value="ENSG00000159388.6"/>
</dbReference>
<dbReference type="Ensembl" id="ENST00000475157.1">
    <property type="protein sequence ID" value="ENSP00000433553.1"/>
    <property type="gene ID" value="ENSG00000159388.6"/>
</dbReference>
<dbReference type="GeneID" id="7832"/>
<dbReference type="KEGG" id="hsa:7832"/>
<dbReference type="MANE-Select" id="ENST00000290551.5">
    <property type="protein sequence ID" value="ENSP00000290551.4"/>
    <property type="RefSeq nucleotide sequence ID" value="NM_006763.3"/>
    <property type="RefSeq protein sequence ID" value="NP_006754.1"/>
</dbReference>
<dbReference type="UCSC" id="uc001gzq.4">
    <property type="organism name" value="human"/>
</dbReference>
<dbReference type="AGR" id="HGNC:1131"/>
<dbReference type="CTD" id="7832"/>
<dbReference type="DisGeNET" id="7832"/>
<dbReference type="GeneCards" id="BTG2"/>
<dbReference type="HGNC" id="HGNC:1131">
    <property type="gene designation" value="BTG2"/>
</dbReference>
<dbReference type="HPA" id="ENSG00000159388">
    <property type="expression patterns" value="Low tissue specificity"/>
</dbReference>
<dbReference type="MalaCards" id="BTG2"/>
<dbReference type="MIM" id="601597">
    <property type="type" value="gene"/>
</dbReference>
<dbReference type="neXtProt" id="NX_P78543"/>
<dbReference type="OpenTargets" id="ENSG00000159388"/>
<dbReference type="PharmGKB" id="PA25451"/>
<dbReference type="VEuPathDB" id="HostDB:ENSG00000159388"/>
<dbReference type="eggNOG" id="KOG4006">
    <property type="taxonomic scope" value="Eukaryota"/>
</dbReference>
<dbReference type="GeneTree" id="ENSGT00950000182952"/>
<dbReference type="HOGENOM" id="CLU_079660_4_0_1"/>
<dbReference type="InParanoid" id="P78543"/>
<dbReference type="OMA" id="CKNQIML"/>
<dbReference type="OrthoDB" id="19928at2759"/>
<dbReference type="PAN-GO" id="P78543">
    <property type="GO annotations" value="4 GO annotations based on evolutionary models"/>
</dbReference>
<dbReference type="PhylomeDB" id="P78543"/>
<dbReference type="TreeFam" id="TF105272"/>
<dbReference type="PathwayCommons" id="P78543"/>
<dbReference type="Reactome" id="R-HSA-6804115">
    <property type="pathway name" value="TP53 regulates transcription of additional cell cycle genes whose exact role in the p53 pathway remain uncertain"/>
</dbReference>
<dbReference type="SignaLink" id="P78543"/>
<dbReference type="SIGNOR" id="P78543"/>
<dbReference type="BioGRID-ORCS" id="7832">
    <property type="hits" value="10 hits in 1155 CRISPR screens"/>
</dbReference>
<dbReference type="ChiTaRS" id="BTG2">
    <property type="organism name" value="human"/>
</dbReference>
<dbReference type="EvolutionaryTrace" id="P78543"/>
<dbReference type="GeneWiki" id="BTG2"/>
<dbReference type="GenomeRNAi" id="7832"/>
<dbReference type="Pharos" id="P78543">
    <property type="development level" value="Tbio"/>
</dbReference>
<dbReference type="PRO" id="PR:P78543"/>
<dbReference type="Proteomes" id="UP000005640">
    <property type="component" value="Chromosome 1"/>
</dbReference>
<dbReference type="RNAct" id="P78543">
    <property type="molecule type" value="protein"/>
</dbReference>
<dbReference type="Bgee" id="ENSG00000159388">
    <property type="expression patterns" value="Expressed in mucosa of stomach and 204 other cell types or tissues"/>
</dbReference>
<dbReference type="GO" id="GO:0005737">
    <property type="term" value="C:cytoplasm"/>
    <property type="evidence" value="ECO:0000318"/>
    <property type="project" value="GO_Central"/>
</dbReference>
<dbReference type="GO" id="GO:0005829">
    <property type="term" value="C:cytosol"/>
    <property type="evidence" value="ECO:0000304"/>
    <property type="project" value="Reactome"/>
</dbReference>
<dbReference type="GO" id="GO:0070062">
    <property type="term" value="C:extracellular exosome"/>
    <property type="evidence" value="ECO:0007005"/>
    <property type="project" value="UniProtKB"/>
</dbReference>
<dbReference type="GO" id="GO:0005634">
    <property type="term" value="C:nucleus"/>
    <property type="evidence" value="ECO:0000318"/>
    <property type="project" value="GO_Central"/>
</dbReference>
<dbReference type="GO" id="GO:0003714">
    <property type="term" value="F:transcription corepressor activity"/>
    <property type="evidence" value="ECO:0007669"/>
    <property type="project" value="Ensembl"/>
</dbReference>
<dbReference type="GO" id="GO:0009952">
    <property type="term" value="P:anterior/posterior pattern specification"/>
    <property type="evidence" value="ECO:0007669"/>
    <property type="project" value="Ensembl"/>
</dbReference>
<dbReference type="GO" id="GO:0008306">
    <property type="term" value="P:associative learning"/>
    <property type="evidence" value="ECO:0007669"/>
    <property type="project" value="Ensembl"/>
</dbReference>
<dbReference type="GO" id="GO:1904628">
    <property type="term" value="P:cellular response to phorbol 13-acetate 12-myristate"/>
    <property type="evidence" value="ECO:0007669"/>
    <property type="project" value="Ensembl"/>
</dbReference>
<dbReference type="GO" id="GO:0021954">
    <property type="term" value="P:central nervous system neuron development"/>
    <property type="evidence" value="ECO:0007669"/>
    <property type="project" value="Ensembl"/>
</dbReference>
<dbReference type="GO" id="GO:0021542">
    <property type="term" value="P:dentate gyrus development"/>
    <property type="evidence" value="ECO:0007669"/>
    <property type="project" value="Ensembl"/>
</dbReference>
<dbReference type="GO" id="GO:0006974">
    <property type="term" value="P:DNA damage response"/>
    <property type="evidence" value="ECO:0000314"/>
    <property type="project" value="MGI"/>
</dbReference>
<dbReference type="GO" id="GO:0006281">
    <property type="term" value="P:DNA repair"/>
    <property type="evidence" value="ECO:0000304"/>
    <property type="project" value="ProtInc"/>
</dbReference>
<dbReference type="GO" id="GO:0008285">
    <property type="term" value="P:negative regulation of cell population proliferation"/>
    <property type="evidence" value="ECO:0000315"/>
    <property type="project" value="UniProtKB"/>
</dbReference>
<dbReference type="GO" id="GO:0007406">
    <property type="term" value="P:negative regulation of neuroblast proliferation"/>
    <property type="evidence" value="ECO:0007669"/>
    <property type="project" value="Ensembl"/>
</dbReference>
<dbReference type="GO" id="GO:0043524">
    <property type="term" value="P:negative regulation of neuron apoptotic process"/>
    <property type="evidence" value="ECO:0007669"/>
    <property type="project" value="Ensembl"/>
</dbReference>
<dbReference type="GO" id="GO:0000122">
    <property type="term" value="P:negative regulation of transcription by RNA polymerase II"/>
    <property type="evidence" value="ECO:0007669"/>
    <property type="project" value="Ensembl"/>
</dbReference>
<dbReference type="GO" id="GO:0017148">
    <property type="term" value="P:negative regulation of translation"/>
    <property type="evidence" value="ECO:0000314"/>
    <property type="project" value="UniProtKB"/>
</dbReference>
<dbReference type="GO" id="GO:0007405">
    <property type="term" value="P:neuroblast proliferation"/>
    <property type="evidence" value="ECO:0007669"/>
    <property type="project" value="Ensembl"/>
</dbReference>
<dbReference type="GO" id="GO:0031175">
    <property type="term" value="P:neuron projection development"/>
    <property type="evidence" value="ECO:0000315"/>
    <property type="project" value="UniProtKB"/>
</dbReference>
<dbReference type="GO" id="GO:0060213">
    <property type="term" value="P:positive regulation of nuclear-transcribed mRNA poly(A) tail shortening"/>
    <property type="evidence" value="ECO:0000314"/>
    <property type="project" value="MGI"/>
</dbReference>
<dbReference type="GO" id="GO:0051602">
    <property type="term" value="P:response to electrical stimulus"/>
    <property type="evidence" value="ECO:0007669"/>
    <property type="project" value="Ensembl"/>
</dbReference>
<dbReference type="GO" id="GO:0009612">
    <property type="term" value="P:response to mechanical stimulus"/>
    <property type="evidence" value="ECO:0007669"/>
    <property type="project" value="Ensembl"/>
</dbReference>
<dbReference type="GO" id="GO:0043434">
    <property type="term" value="P:response to peptide hormone"/>
    <property type="evidence" value="ECO:0007669"/>
    <property type="project" value="Ensembl"/>
</dbReference>
<dbReference type="GO" id="GO:0035914">
    <property type="term" value="P:skeletal muscle cell differentiation"/>
    <property type="evidence" value="ECO:0007669"/>
    <property type="project" value="Ensembl"/>
</dbReference>
<dbReference type="FunFam" id="3.90.640.90:FF:000003">
    <property type="entry name" value="BTG1 isoform 1"/>
    <property type="match status" value="1"/>
</dbReference>
<dbReference type="Gene3D" id="3.90.640.90">
    <property type="entry name" value="Anti-proliferative protein, N-terminal domain"/>
    <property type="match status" value="1"/>
</dbReference>
<dbReference type="InterPro" id="IPR002087">
    <property type="entry name" value="Anti_prolifrtn"/>
</dbReference>
<dbReference type="InterPro" id="IPR033332">
    <property type="entry name" value="BTG"/>
</dbReference>
<dbReference type="InterPro" id="IPR036054">
    <property type="entry name" value="BTG-like_sf"/>
</dbReference>
<dbReference type="PANTHER" id="PTHR22978">
    <property type="entry name" value="B-CELL TRANSLOCATION GENE"/>
    <property type="match status" value="1"/>
</dbReference>
<dbReference type="PANTHER" id="PTHR22978:SF29">
    <property type="entry name" value="PROTEIN BTG2"/>
    <property type="match status" value="1"/>
</dbReference>
<dbReference type="Pfam" id="PF07742">
    <property type="entry name" value="BTG"/>
    <property type="match status" value="1"/>
</dbReference>
<dbReference type="PRINTS" id="PR00310">
    <property type="entry name" value="ANTIPRLFBTG1"/>
</dbReference>
<dbReference type="SMART" id="SM00099">
    <property type="entry name" value="btg1"/>
    <property type="match status" value="1"/>
</dbReference>
<dbReference type="SUPFAM" id="SSF160696">
    <property type="entry name" value="BTG domain-like"/>
    <property type="match status" value="1"/>
</dbReference>
<dbReference type="PROSITE" id="PS00960">
    <property type="entry name" value="BTG_1"/>
    <property type="match status" value="1"/>
</dbReference>
<dbReference type="PROSITE" id="PS01203">
    <property type="entry name" value="BTG_2"/>
    <property type="match status" value="1"/>
</dbReference>
<feature type="chain" id="PRO_0000143804" description="Protein BTG2">
    <location>
        <begin position="1"/>
        <end position="158"/>
    </location>
</feature>
<feature type="modified residue" description="Phosphoserine; by MAPK1 and MAPK3" evidence="4">
    <location>
        <position position="147"/>
    </location>
</feature>
<feature type="modified residue" description="Phosphoserine; by MAPK14" evidence="4">
    <location>
        <position position="149"/>
    </location>
</feature>
<feature type="sequence variant" id="VAR_048437" description="In dbSNP:rs12039961.">
    <original>V</original>
    <variation>M</variation>
    <location>
        <position position="153"/>
    </location>
</feature>
<feature type="mutagenesis site" description="Impairs interaction with CNOT7 and CNOT8." evidence="8">
    <original>H</original>
    <variation>A</variation>
    <location>
        <position position="53"/>
    </location>
</feature>
<feature type="mutagenesis site" description="Abolishes interaction with CNOT7 and CNOT8." evidence="7 8">
    <original>Y</original>
    <variation>A</variation>
    <location>
        <position position="65"/>
    </location>
</feature>
<feature type="mutagenesis site" description="Abolishes interaction with CNOT7 and CNOT8." evidence="8">
    <original>D</original>
    <variation>A</variation>
    <location>
        <position position="75"/>
    </location>
</feature>
<feature type="mutagenesis site" description="Abolishes interaction with CNOT7 and CNOT8; impairs anti-proliferative activity." evidence="7 8">
    <original>W</original>
    <variation>A</variation>
    <location>
        <position position="103"/>
    </location>
</feature>
<feature type="mutagenesis site" description="Impairs interaction with CNOT7 and CNOT8." evidence="8">
    <original>D</original>
    <variation>A</variation>
    <location>
        <position position="105"/>
    </location>
</feature>
<feature type="mutagenesis site" description="Impairs interaction with CNOT7. Inhibits CNOT7 mRNA deadenylase activity." evidence="7">
    <original>E</original>
    <variation>A</variation>
    <location>
        <position position="115"/>
    </location>
</feature>
<feature type="mutagenesis site" description="Impairs phosphorylation by MAPK1 and MAPK3, and decreases PIN1-binding." evidence="4">
    <original>S</original>
    <variation>A</variation>
    <location>
        <position position="147"/>
    </location>
</feature>
<feature type="mutagenesis site" description="Impairs PIN1-binding." evidence="4">
    <original>P</original>
    <variation>A</variation>
    <location>
        <position position="148"/>
    </location>
</feature>
<feature type="mutagenesis site" description="Impairs phosphorylation by MAPK14, and decreases PIN1-binding." evidence="4">
    <original>S</original>
    <variation>A</variation>
    <location>
        <position position="149"/>
    </location>
</feature>
<feature type="helix" evidence="11">
    <location>
        <begin position="10"/>
        <end position="27"/>
    </location>
</feature>
<feature type="helix" evidence="11">
    <location>
        <begin position="32"/>
        <end position="50"/>
    </location>
</feature>
<feature type="turn" evidence="11">
    <location>
        <begin position="59"/>
        <end position="62"/>
    </location>
</feature>
<feature type="helix" evidence="11">
    <location>
        <begin position="63"/>
        <end position="66"/>
    </location>
</feature>
<feature type="strand" evidence="11">
    <location>
        <begin position="71"/>
        <end position="73"/>
    </location>
</feature>
<feature type="helix" evidence="11">
    <location>
        <begin position="76"/>
        <end position="84"/>
    </location>
</feature>
<feature type="helix" evidence="11">
    <location>
        <begin position="89"/>
        <end position="95"/>
    </location>
</feature>
<feature type="strand" evidence="11">
    <location>
        <begin position="100"/>
        <end position="105"/>
    </location>
</feature>
<feature type="strand" evidence="11">
    <location>
        <begin position="108"/>
        <end position="114"/>
    </location>
</feature>
<feature type="strand" evidence="11">
    <location>
        <begin position="119"/>
        <end position="124"/>
    </location>
</feature>